<reference key="1">
    <citation type="journal article" date="2011" name="Stand. Genomic Sci.">
        <title>Complete genome sequence of Rhodospirillum rubrum type strain (S1).</title>
        <authorList>
            <person name="Munk A.C."/>
            <person name="Copeland A."/>
            <person name="Lucas S."/>
            <person name="Lapidus A."/>
            <person name="Del Rio T.G."/>
            <person name="Barry K."/>
            <person name="Detter J.C."/>
            <person name="Hammon N."/>
            <person name="Israni S."/>
            <person name="Pitluck S."/>
            <person name="Brettin T."/>
            <person name="Bruce D."/>
            <person name="Han C."/>
            <person name="Tapia R."/>
            <person name="Gilna P."/>
            <person name="Schmutz J."/>
            <person name="Larimer F."/>
            <person name="Land M."/>
            <person name="Kyrpides N.C."/>
            <person name="Mavromatis K."/>
            <person name="Richardson P."/>
            <person name="Rohde M."/>
            <person name="Goeker M."/>
            <person name="Klenk H.P."/>
            <person name="Zhang Y."/>
            <person name="Roberts G.P."/>
            <person name="Reslewic S."/>
            <person name="Schwartz D.C."/>
        </authorList>
    </citation>
    <scope>NUCLEOTIDE SEQUENCE [LARGE SCALE GENOMIC DNA]</scope>
    <source>
        <strain>ATCC 11170 / ATH 1.1.1 / DSM 467 / LMG 4362 / NCIMB 8255 / S1</strain>
    </source>
</reference>
<feature type="chain" id="PRO_1000016661" description="tRNA uridine 5-carboxymethylaminomethyl modification enzyme MnmG">
    <location>
        <begin position="1"/>
        <end position="629"/>
    </location>
</feature>
<feature type="binding site" evidence="1">
    <location>
        <begin position="11"/>
        <end position="16"/>
    </location>
    <ligand>
        <name>FAD</name>
        <dbReference type="ChEBI" id="CHEBI:57692"/>
    </ligand>
</feature>
<feature type="binding site" evidence="1">
    <location>
        <begin position="271"/>
        <end position="285"/>
    </location>
    <ligand>
        <name>NAD(+)</name>
        <dbReference type="ChEBI" id="CHEBI:57540"/>
    </ligand>
</feature>
<dbReference type="EMBL" id="CP000230">
    <property type="protein sequence ID" value="ABC24419.1"/>
    <property type="molecule type" value="Genomic_DNA"/>
</dbReference>
<dbReference type="RefSeq" id="WP_011391372.1">
    <property type="nucleotide sequence ID" value="NC_007643.1"/>
</dbReference>
<dbReference type="RefSeq" id="YP_428706.1">
    <property type="nucleotide sequence ID" value="NC_007643.1"/>
</dbReference>
<dbReference type="SMR" id="Q2RN76"/>
<dbReference type="STRING" id="269796.Rru_A3625"/>
<dbReference type="EnsemblBacteria" id="ABC24419">
    <property type="protein sequence ID" value="ABC24419"/>
    <property type="gene ID" value="Rru_A3625"/>
</dbReference>
<dbReference type="KEGG" id="rru:Rru_A3625"/>
<dbReference type="PATRIC" id="fig|269796.9.peg.3746"/>
<dbReference type="eggNOG" id="COG0445">
    <property type="taxonomic scope" value="Bacteria"/>
</dbReference>
<dbReference type="HOGENOM" id="CLU_007831_2_2_5"/>
<dbReference type="PhylomeDB" id="Q2RN76"/>
<dbReference type="Proteomes" id="UP000001929">
    <property type="component" value="Chromosome"/>
</dbReference>
<dbReference type="GO" id="GO:0005829">
    <property type="term" value="C:cytosol"/>
    <property type="evidence" value="ECO:0007669"/>
    <property type="project" value="TreeGrafter"/>
</dbReference>
<dbReference type="GO" id="GO:0050660">
    <property type="term" value="F:flavin adenine dinucleotide binding"/>
    <property type="evidence" value="ECO:0007669"/>
    <property type="project" value="UniProtKB-UniRule"/>
</dbReference>
<dbReference type="GO" id="GO:0030488">
    <property type="term" value="P:tRNA methylation"/>
    <property type="evidence" value="ECO:0007669"/>
    <property type="project" value="TreeGrafter"/>
</dbReference>
<dbReference type="GO" id="GO:0002098">
    <property type="term" value="P:tRNA wobble uridine modification"/>
    <property type="evidence" value="ECO:0007669"/>
    <property type="project" value="InterPro"/>
</dbReference>
<dbReference type="FunFam" id="3.50.50.60:FF:000082">
    <property type="entry name" value="protein MTO1 homolog, mitochondrial isoform X1"/>
    <property type="match status" value="1"/>
</dbReference>
<dbReference type="FunFam" id="1.10.150.570:FF:000001">
    <property type="entry name" value="tRNA uridine 5-carboxymethylaminomethyl modification enzyme MnmG"/>
    <property type="match status" value="1"/>
</dbReference>
<dbReference type="FunFam" id="3.50.50.60:FF:000002">
    <property type="entry name" value="tRNA uridine 5-carboxymethylaminomethyl modification enzyme MnmG"/>
    <property type="match status" value="1"/>
</dbReference>
<dbReference type="Gene3D" id="3.50.50.60">
    <property type="entry name" value="FAD/NAD(P)-binding domain"/>
    <property type="match status" value="2"/>
</dbReference>
<dbReference type="Gene3D" id="1.10.150.570">
    <property type="entry name" value="GidA associated domain, C-terminal subdomain"/>
    <property type="match status" value="1"/>
</dbReference>
<dbReference type="HAMAP" id="MF_00129">
    <property type="entry name" value="MnmG_GidA"/>
    <property type="match status" value="1"/>
</dbReference>
<dbReference type="InterPro" id="IPR036188">
    <property type="entry name" value="FAD/NAD-bd_sf"/>
</dbReference>
<dbReference type="InterPro" id="IPR049312">
    <property type="entry name" value="GIDA_C_N"/>
</dbReference>
<dbReference type="InterPro" id="IPR004416">
    <property type="entry name" value="MnmG"/>
</dbReference>
<dbReference type="InterPro" id="IPR002218">
    <property type="entry name" value="MnmG-rel"/>
</dbReference>
<dbReference type="InterPro" id="IPR020595">
    <property type="entry name" value="MnmG-rel_CS"/>
</dbReference>
<dbReference type="InterPro" id="IPR026904">
    <property type="entry name" value="MnmG_C"/>
</dbReference>
<dbReference type="InterPro" id="IPR047001">
    <property type="entry name" value="MnmG_C_subdom"/>
</dbReference>
<dbReference type="InterPro" id="IPR044920">
    <property type="entry name" value="MnmG_C_subdom_sf"/>
</dbReference>
<dbReference type="InterPro" id="IPR040131">
    <property type="entry name" value="MnmG_N"/>
</dbReference>
<dbReference type="NCBIfam" id="TIGR00136">
    <property type="entry name" value="mnmG_gidA"/>
    <property type="match status" value="1"/>
</dbReference>
<dbReference type="PANTHER" id="PTHR11806">
    <property type="entry name" value="GLUCOSE INHIBITED DIVISION PROTEIN A"/>
    <property type="match status" value="1"/>
</dbReference>
<dbReference type="PANTHER" id="PTHR11806:SF0">
    <property type="entry name" value="PROTEIN MTO1 HOMOLOG, MITOCHONDRIAL"/>
    <property type="match status" value="1"/>
</dbReference>
<dbReference type="Pfam" id="PF01134">
    <property type="entry name" value="GIDA"/>
    <property type="match status" value="1"/>
</dbReference>
<dbReference type="Pfam" id="PF21680">
    <property type="entry name" value="GIDA_C_1st"/>
    <property type="match status" value="1"/>
</dbReference>
<dbReference type="Pfam" id="PF13932">
    <property type="entry name" value="SAM_GIDA_C"/>
    <property type="match status" value="1"/>
</dbReference>
<dbReference type="SMART" id="SM01228">
    <property type="entry name" value="GIDA_assoc_3"/>
    <property type="match status" value="1"/>
</dbReference>
<dbReference type="SUPFAM" id="SSF51905">
    <property type="entry name" value="FAD/NAD(P)-binding domain"/>
    <property type="match status" value="1"/>
</dbReference>
<dbReference type="PROSITE" id="PS01280">
    <property type="entry name" value="GIDA_1"/>
    <property type="match status" value="1"/>
</dbReference>
<dbReference type="PROSITE" id="PS01281">
    <property type="entry name" value="GIDA_2"/>
    <property type="match status" value="1"/>
</dbReference>
<comment type="function">
    <text evidence="1">NAD-binding protein involved in the addition of a carboxymethylaminomethyl (cmnm) group at the wobble position (U34) of certain tRNAs, forming tRNA-cmnm(5)s(2)U34.</text>
</comment>
<comment type="cofactor">
    <cofactor evidence="1">
        <name>FAD</name>
        <dbReference type="ChEBI" id="CHEBI:57692"/>
    </cofactor>
</comment>
<comment type="subunit">
    <text evidence="1">Homodimer. Heterotetramer of two MnmE and two MnmG subunits.</text>
</comment>
<comment type="subcellular location">
    <subcellularLocation>
        <location evidence="1">Cytoplasm</location>
    </subcellularLocation>
</comment>
<comment type="similarity">
    <text evidence="1">Belongs to the MnmG family.</text>
</comment>
<evidence type="ECO:0000255" key="1">
    <source>
        <dbReference type="HAMAP-Rule" id="MF_00129"/>
    </source>
</evidence>
<organism>
    <name type="scientific">Rhodospirillum rubrum (strain ATCC 11170 / ATH 1.1.1 / DSM 467 / LMG 4362 / NCIMB 8255 / S1)</name>
    <dbReference type="NCBI Taxonomy" id="269796"/>
    <lineage>
        <taxon>Bacteria</taxon>
        <taxon>Pseudomonadati</taxon>
        <taxon>Pseudomonadota</taxon>
        <taxon>Alphaproteobacteria</taxon>
        <taxon>Rhodospirillales</taxon>
        <taxon>Rhodospirillaceae</taxon>
        <taxon>Rhodospirillum</taxon>
    </lineage>
</organism>
<proteinExistence type="inferred from homology"/>
<keyword id="KW-0963">Cytoplasm</keyword>
<keyword id="KW-0274">FAD</keyword>
<keyword id="KW-0285">Flavoprotein</keyword>
<keyword id="KW-0520">NAD</keyword>
<keyword id="KW-1185">Reference proteome</keyword>
<keyword id="KW-0819">tRNA processing</keyword>
<sequence length="629" mass="66792">MTNHWDVIVVGGGHAGTEAAAAAARLGAKTLLATHKLETVGTMSCNPAIGGLAKGHLVREIDALDGVMGRAIDRGGIQFRILNRSKGPAVRGPRAQADRALYAQAVRAILADQPGLTLAALAIEDLLIGNDGRCAGVIDAEGGVHRAGAVVLTTGTFLRGVIHIGTQTTPAGRIGEAPALGLSATLARLGFPLGRLKTGTPPRLDGRTIAWATLESQPGDEPPPPFSFLTTAITTPQISCAITETTAETHRVIRENLHRAPLYSGQIQGVGPRYCPSIEDKVVRFADRDRHQIFLEPEGLDDPTVYPNGISTSLPIDVQLALLATIPGLEKAEMMRPGYAIEYDFVDPRCLGPTLETDRLPGLFLAGQINGTTGYEEAAAQGLIAGLNAARVAGAGERAAPITFDRAEGYLGVLVDDLITLGTTEPYRMFTSRAEYRLLLRADNADLRLTAKGIALGCVGAARTAAFEDKRAALTAARTMIDGLALTPPDLARRGIAVNQDGQRRTPLDLLCHADIDWARLVALWPELGAIRPDVAEQLEIGARYAGYLERMHGDVAAFRRDEALVLPADLAYDGLANLSAELRGKLTLARPATLGAAARIPGMTPAALTALLRHVKRRERDSVEECFT</sequence>
<name>MNMG_RHORT</name>
<accession>Q2RN76</accession>
<gene>
    <name evidence="1" type="primary">mnmG</name>
    <name evidence="1" type="synonym">gidA</name>
    <name type="ordered locus">Rru_A3625</name>
</gene>
<protein>
    <recommendedName>
        <fullName evidence="1">tRNA uridine 5-carboxymethylaminomethyl modification enzyme MnmG</fullName>
    </recommendedName>
    <alternativeName>
        <fullName evidence="1">Glucose-inhibited division protein A</fullName>
    </alternativeName>
</protein>